<keyword id="KW-0963">Cytoplasm</keyword>
<keyword id="KW-0378">Hydrolase</keyword>
<keyword id="KW-0546">Nucleotide metabolism</keyword>
<evidence type="ECO:0000255" key="1">
    <source>
        <dbReference type="HAMAP-Rule" id="MF_00528"/>
    </source>
</evidence>
<reference key="1">
    <citation type="journal article" date="2002" name="Nature">
        <title>Comparison of the genomes of two Xanthomonas pathogens with differing host specificities.</title>
        <authorList>
            <person name="da Silva A.C.R."/>
            <person name="Ferro J.A."/>
            <person name="Reinach F.C."/>
            <person name="Farah C.S."/>
            <person name="Furlan L.R."/>
            <person name="Quaggio R.B."/>
            <person name="Monteiro-Vitorello C.B."/>
            <person name="Van Sluys M.A."/>
            <person name="Almeida N.F. Jr."/>
            <person name="Alves L.M.C."/>
            <person name="do Amaral A.M."/>
            <person name="Bertolini M.C."/>
            <person name="Camargo L.E.A."/>
            <person name="Camarotte G."/>
            <person name="Cannavan F."/>
            <person name="Cardozo J."/>
            <person name="Chambergo F."/>
            <person name="Ciapina L.P."/>
            <person name="Cicarelli R.M.B."/>
            <person name="Coutinho L.L."/>
            <person name="Cursino-Santos J.R."/>
            <person name="El-Dorry H."/>
            <person name="Faria J.B."/>
            <person name="Ferreira A.J.S."/>
            <person name="Ferreira R.C.C."/>
            <person name="Ferro M.I.T."/>
            <person name="Formighieri E.F."/>
            <person name="Franco M.C."/>
            <person name="Greggio C.C."/>
            <person name="Gruber A."/>
            <person name="Katsuyama A.M."/>
            <person name="Kishi L.T."/>
            <person name="Leite R.P."/>
            <person name="Lemos E.G.M."/>
            <person name="Lemos M.V.F."/>
            <person name="Locali E.C."/>
            <person name="Machado M.A."/>
            <person name="Madeira A.M.B.N."/>
            <person name="Martinez-Rossi N.M."/>
            <person name="Martins E.C."/>
            <person name="Meidanis J."/>
            <person name="Menck C.F.M."/>
            <person name="Miyaki C.Y."/>
            <person name="Moon D.H."/>
            <person name="Moreira L.M."/>
            <person name="Novo M.T.M."/>
            <person name="Okura V.K."/>
            <person name="Oliveira M.C."/>
            <person name="Oliveira V.R."/>
            <person name="Pereira H.A."/>
            <person name="Rossi A."/>
            <person name="Sena J.A.D."/>
            <person name="Silva C."/>
            <person name="de Souza R.F."/>
            <person name="Spinola L.A.F."/>
            <person name="Takita M.A."/>
            <person name="Tamura R.E."/>
            <person name="Teixeira E.C."/>
            <person name="Tezza R.I.D."/>
            <person name="Trindade dos Santos M."/>
            <person name="Truffi D."/>
            <person name="Tsai S.M."/>
            <person name="White F.F."/>
            <person name="Setubal J.C."/>
            <person name="Kitajima J.P."/>
        </authorList>
    </citation>
    <scope>NUCLEOTIDE SEQUENCE [LARGE SCALE GENOMIC DNA]</scope>
    <source>
        <strain>306</strain>
    </source>
</reference>
<feature type="chain" id="PRO_0000123077" description="7-methyl-GTP pyrophosphatase">
    <location>
        <begin position="1"/>
        <end position="190"/>
    </location>
</feature>
<feature type="active site" description="Proton acceptor" evidence="1">
    <location>
        <position position="69"/>
    </location>
</feature>
<feature type="site" description="Important for substrate specificity" evidence="1">
    <location>
        <position position="12"/>
    </location>
</feature>
<feature type="site" description="Important for substrate specificity" evidence="1">
    <location>
        <position position="70"/>
    </location>
</feature>
<feature type="site" description="Important for substrate specificity" evidence="1">
    <location>
        <position position="152"/>
    </location>
</feature>
<comment type="function">
    <text evidence="1">Nucleoside triphosphate pyrophosphatase that hydrolyzes 7-methyl-GTP (m(7)GTP). May have a dual role in cell division arrest and in preventing the incorporation of modified nucleotides into cellular nucleic acids.</text>
</comment>
<comment type="catalytic activity">
    <reaction evidence="1">
        <text>N(7)-methyl-GTP + H2O = N(7)-methyl-GMP + diphosphate + H(+)</text>
        <dbReference type="Rhea" id="RHEA:58744"/>
        <dbReference type="ChEBI" id="CHEBI:15377"/>
        <dbReference type="ChEBI" id="CHEBI:15378"/>
        <dbReference type="ChEBI" id="CHEBI:33019"/>
        <dbReference type="ChEBI" id="CHEBI:58285"/>
        <dbReference type="ChEBI" id="CHEBI:87133"/>
    </reaction>
</comment>
<comment type="cofactor">
    <cofactor evidence="1">
        <name>a divalent metal cation</name>
        <dbReference type="ChEBI" id="CHEBI:60240"/>
    </cofactor>
</comment>
<comment type="subcellular location">
    <subcellularLocation>
        <location evidence="1">Cytoplasm</location>
    </subcellularLocation>
</comment>
<comment type="similarity">
    <text evidence="1">Belongs to the Maf family. YceF subfamily.</text>
</comment>
<organism>
    <name type="scientific">Xanthomonas axonopodis pv. citri (strain 306)</name>
    <dbReference type="NCBI Taxonomy" id="190486"/>
    <lineage>
        <taxon>Bacteria</taxon>
        <taxon>Pseudomonadati</taxon>
        <taxon>Pseudomonadota</taxon>
        <taxon>Gammaproteobacteria</taxon>
        <taxon>Lysobacterales</taxon>
        <taxon>Lysobacteraceae</taxon>
        <taxon>Xanthomonas</taxon>
    </lineage>
</organism>
<gene>
    <name type="ordered locus">XAC1120</name>
</gene>
<dbReference type="EC" id="3.6.1.-" evidence="1"/>
<dbReference type="EMBL" id="AE008923">
    <property type="protein sequence ID" value="AAM35993.1"/>
    <property type="molecule type" value="Genomic_DNA"/>
</dbReference>
<dbReference type="SMR" id="Q8PNF1"/>
<dbReference type="KEGG" id="xac:XAC1120"/>
<dbReference type="eggNOG" id="COG0424">
    <property type="taxonomic scope" value="Bacteria"/>
</dbReference>
<dbReference type="HOGENOM" id="CLU_040416_1_0_6"/>
<dbReference type="Proteomes" id="UP000000576">
    <property type="component" value="Chromosome"/>
</dbReference>
<dbReference type="GO" id="GO:0005737">
    <property type="term" value="C:cytoplasm"/>
    <property type="evidence" value="ECO:0007669"/>
    <property type="project" value="UniProtKB-SubCell"/>
</dbReference>
<dbReference type="GO" id="GO:0047429">
    <property type="term" value="F:nucleoside triphosphate diphosphatase activity"/>
    <property type="evidence" value="ECO:0007669"/>
    <property type="project" value="InterPro"/>
</dbReference>
<dbReference type="GO" id="GO:0009117">
    <property type="term" value="P:nucleotide metabolic process"/>
    <property type="evidence" value="ECO:0007669"/>
    <property type="project" value="UniProtKB-KW"/>
</dbReference>
<dbReference type="CDD" id="cd00555">
    <property type="entry name" value="Maf"/>
    <property type="match status" value="1"/>
</dbReference>
<dbReference type="FunFam" id="3.90.950.10:FF:000005">
    <property type="entry name" value="7-methyl-GTP pyrophosphatase"/>
    <property type="match status" value="1"/>
</dbReference>
<dbReference type="Gene3D" id="3.90.950.10">
    <property type="match status" value="1"/>
</dbReference>
<dbReference type="HAMAP" id="MF_00528">
    <property type="entry name" value="Maf"/>
    <property type="match status" value="1"/>
</dbReference>
<dbReference type="InterPro" id="IPR029001">
    <property type="entry name" value="ITPase-like_fam"/>
</dbReference>
<dbReference type="InterPro" id="IPR003697">
    <property type="entry name" value="Maf-like"/>
</dbReference>
<dbReference type="NCBIfam" id="TIGR00172">
    <property type="entry name" value="maf"/>
    <property type="match status" value="1"/>
</dbReference>
<dbReference type="PANTHER" id="PTHR43213:SF10">
    <property type="entry name" value="7-METHYL-GTP PYROPHOSPHATASE"/>
    <property type="match status" value="1"/>
</dbReference>
<dbReference type="PANTHER" id="PTHR43213">
    <property type="entry name" value="BIFUNCTIONAL DTTP/UTP PYROPHOSPHATASE/METHYLTRANSFERASE PROTEIN-RELATED"/>
    <property type="match status" value="1"/>
</dbReference>
<dbReference type="Pfam" id="PF02545">
    <property type="entry name" value="Maf"/>
    <property type="match status" value="1"/>
</dbReference>
<dbReference type="PIRSF" id="PIRSF006305">
    <property type="entry name" value="Maf"/>
    <property type="match status" value="1"/>
</dbReference>
<dbReference type="SUPFAM" id="SSF52972">
    <property type="entry name" value="ITPase-like"/>
    <property type="match status" value="1"/>
</dbReference>
<protein>
    <recommendedName>
        <fullName evidence="1">7-methyl-GTP pyrophosphatase</fullName>
        <shortName evidence="1">m(7)GTP pyrophosphatase</shortName>
        <ecNumber evidence="1">3.6.1.-</ecNumber>
    </recommendedName>
</protein>
<proteinExistence type="inferred from homology"/>
<sequence>MPRLILASTSVYRRALLGRLQLDFDTVRPEVDEQARPGESPSALASRLAVEKAATVAARFPDAWVIGSDQVADLDGQALGKPGTHERARMQLTAMSGQTVRFHTAVSLVGPERQLHALDLTEVQLRALTVVEIERYLDAEPALDCAGSFKCEGLGISLFDAIRSEDPTALVGLPMIALARLLRQAGFQIP</sequence>
<name>NTPPB_XANAC</name>
<accession>Q8PNF1</accession>